<organism>
    <name type="scientific">Homo sapiens</name>
    <name type="common">Human</name>
    <dbReference type="NCBI Taxonomy" id="9606"/>
    <lineage>
        <taxon>Eukaryota</taxon>
        <taxon>Metazoa</taxon>
        <taxon>Chordata</taxon>
        <taxon>Craniata</taxon>
        <taxon>Vertebrata</taxon>
        <taxon>Euteleostomi</taxon>
        <taxon>Mammalia</taxon>
        <taxon>Eutheria</taxon>
        <taxon>Euarchontoglires</taxon>
        <taxon>Primates</taxon>
        <taxon>Haplorrhini</taxon>
        <taxon>Catarrhini</taxon>
        <taxon>Hominidae</taxon>
        <taxon>Homo</taxon>
    </lineage>
</organism>
<dbReference type="EMBL" id="AF196976">
    <property type="protein sequence ID" value="AAG28019.2"/>
    <property type="molecule type" value="mRNA"/>
</dbReference>
<dbReference type="EMBL" id="AJ297858">
    <property type="protein sequence ID" value="CAC82651.1"/>
    <property type="molecule type" value="mRNA"/>
</dbReference>
<dbReference type="EMBL" id="AY358307">
    <property type="protein sequence ID" value="AAQ88674.1"/>
    <property type="molecule type" value="mRNA"/>
</dbReference>
<dbReference type="EMBL" id="AK172751">
    <property type="protein sequence ID" value="BAD18737.1"/>
    <property type="molecule type" value="mRNA"/>
</dbReference>
<dbReference type="EMBL" id="AK314047">
    <property type="protein sequence ID" value="BAG36756.1"/>
    <property type="molecule type" value="mRNA"/>
</dbReference>
<dbReference type="EMBL" id="CH236947">
    <property type="protein sequence ID" value="EAL24316.1"/>
    <property type="molecule type" value="Genomic_DNA"/>
</dbReference>
<dbReference type="EMBL" id="BC111561">
    <property type="protein sequence ID" value="AAI11562.1"/>
    <property type="molecule type" value="mRNA"/>
</dbReference>
<dbReference type="EMBL" id="BC111745">
    <property type="protein sequence ID" value="AAI11746.1"/>
    <property type="molecule type" value="mRNA"/>
</dbReference>
<dbReference type="CCDS" id="CCDS5799.1"/>
<dbReference type="RefSeq" id="NP_071426.1">
    <property type="nucleotide sequence ID" value="NM_022143.5"/>
</dbReference>
<dbReference type="RefSeq" id="XP_011514763.1">
    <property type="nucleotide sequence ID" value="XM_011516461.4"/>
</dbReference>
<dbReference type="RefSeq" id="XP_016867994.1">
    <property type="nucleotide sequence ID" value="XM_017012505.1"/>
</dbReference>
<dbReference type="RefSeq" id="XP_047276651.1">
    <property type="nucleotide sequence ID" value="XM_047420695.1"/>
</dbReference>
<dbReference type="RefSeq" id="XP_054214758.1">
    <property type="nucleotide sequence ID" value="XM_054358783.1"/>
</dbReference>
<dbReference type="RefSeq" id="XP_054214759.1">
    <property type="nucleotide sequence ID" value="XM_054358784.1"/>
</dbReference>
<dbReference type="PDB" id="2DL9">
    <property type="method" value="NMR"/>
    <property type="chains" value="A=353-442"/>
</dbReference>
<dbReference type="PDB" id="3ZYI">
    <property type="method" value="X-ray"/>
    <property type="resolution" value="2.60 A"/>
    <property type="chains" value="A=1-444"/>
</dbReference>
<dbReference type="PDBsum" id="2DL9"/>
<dbReference type="PDBsum" id="3ZYI"/>
<dbReference type="SMR" id="Q9HBW1"/>
<dbReference type="BioGRID" id="122061">
    <property type="interactions" value="23"/>
</dbReference>
<dbReference type="FunCoup" id="Q9HBW1">
    <property type="interactions" value="458"/>
</dbReference>
<dbReference type="IntAct" id="Q9HBW1">
    <property type="interactions" value="16"/>
</dbReference>
<dbReference type="MINT" id="Q9HBW1"/>
<dbReference type="STRING" id="9606.ENSP00000249363"/>
<dbReference type="GlyConnect" id="1453">
    <property type="glycosylation" value="1 N-Linked glycan (1 site)"/>
</dbReference>
<dbReference type="GlyCosmos" id="Q9HBW1">
    <property type="glycosylation" value="9 sites, 1 glycan"/>
</dbReference>
<dbReference type="GlyGen" id="Q9HBW1">
    <property type="glycosylation" value="9 sites, 1 N-linked glycan (1 site)"/>
</dbReference>
<dbReference type="iPTMnet" id="Q9HBW1"/>
<dbReference type="PhosphoSitePlus" id="Q9HBW1"/>
<dbReference type="BioMuta" id="LRRC4"/>
<dbReference type="DMDM" id="51701696"/>
<dbReference type="jPOST" id="Q9HBW1"/>
<dbReference type="MassIVE" id="Q9HBW1"/>
<dbReference type="PaxDb" id="9606-ENSP00000249363"/>
<dbReference type="PeptideAtlas" id="Q9HBW1"/>
<dbReference type="ProteomicsDB" id="81601"/>
<dbReference type="Antibodypedia" id="55653">
    <property type="antibodies" value="107 antibodies from 25 providers"/>
</dbReference>
<dbReference type="DNASU" id="64101"/>
<dbReference type="Ensembl" id="ENST00000249363.4">
    <property type="protein sequence ID" value="ENSP00000249363.3"/>
    <property type="gene ID" value="ENSG00000128594.8"/>
</dbReference>
<dbReference type="GeneID" id="64101"/>
<dbReference type="KEGG" id="hsa:64101"/>
<dbReference type="MANE-Select" id="ENST00000249363.4">
    <property type="protein sequence ID" value="ENSP00000249363.3"/>
    <property type="RefSeq nucleotide sequence ID" value="NM_022143.5"/>
    <property type="RefSeq protein sequence ID" value="NP_071426.1"/>
</dbReference>
<dbReference type="UCSC" id="uc003vmk.4">
    <property type="organism name" value="human"/>
</dbReference>
<dbReference type="AGR" id="HGNC:15586"/>
<dbReference type="CTD" id="64101"/>
<dbReference type="DisGeNET" id="64101"/>
<dbReference type="GeneCards" id="LRRC4"/>
<dbReference type="HGNC" id="HGNC:15586">
    <property type="gene designation" value="LRRC4"/>
</dbReference>
<dbReference type="HPA" id="ENSG00000128594">
    <property type="expression patterns" value="Tissue enhanced (brain)"/>
</dbReference>
<dbReference type="MalaCards" id="LRRC4"/>
<dbReference type="MIM" id="610486">
    <property type="type" value="gene"/>
</dbReference>
<dbReference type="neXtProt" id="NX_Q9HBW1"/>
<dbReference type="OpenTargets" id="ENSG00000128594"/>
<dbReference type="PharmGKB" id="PA30463"/>
<dbReference type="VEuPathDB" id="HostDB:ENSG00000128594"/>
<dbReference type="eggNOG" id="KOG0619">
    <property type="taxonomic scope" value="Eukaryota"/>
</dbReference>
<dbReference type="GeneTree" id="ENSGT00940000159260"/>
<dbReference type="HOGENOM" id="CLU_000288_18_24_1"/>
<dbReference type="InParanoid" id="Q9HBW1"/>
<dbReference type="OMA" id="WTDNNVG"/>
<dbReference type="OrthoDB" id="28057at2759"/>
<dbReference type="PAN-GO" id="Q9HBW1">
    <property type="GO annotations" value="7 GO annotations based on evolutionary models"/>
</dbReference>
<dbReference type="PhylomeDB" id="Q9HBW1"/>
<dbReference type="TreeFam" id="TF324303"/>
<dbReference type="PathwayCommons" id="Q9HBW1"/>
<dbReference type="SignaLink" id="Q9HBW1"/>
<dbReference type="SIGNOR" id="Q9HBW1"/>
<dbReference type="BioGRID-ORCS" id="64101">
    <property type="hits" value="12 hits in 1142 CRISPR screens"/>
</dbReference>
<dbReference type="EvolutionaryTrace" id="Q9HBW1"/>
<dbReference type="GeneWiki" id="LRRC4"/>
<dbReference type="GenomeRNAi" id="64101"/>
<dbReference type="Pharos" id="Q9HBW1">
    <property type="development level" value="Tbio"/>
</dbReference>
<dbReference type="PRO" id="PR:Q9HBW1"/>
<dbReference type="Proteomes" id="UP000005640">
    <property type="component" value="Chromosome 7"/>
</dbReference>
<dbReference type="RNAct" id="Q9HBW1">
    <property type="molecule type" value="protein"/>
</dbReference>
<dbReference type="Bgee" id="ENSG00000128594">
    <property type="expression patterns" value="Expressed in ventricular zone and 149 other cell types or tissues"/>
</dbReference>
<dbReference type="ExpressionAtlas" id="Q9HBW1">
    <property type="expression patterns" value="baseline and differential"/>
</dbReference>
<dbReference type="GO" id="GO:0043197">
    <property type="term" value="C:dendritic spine"/>
    <property type="evidence" value="ECO:0007669"/>
    <property type="project" value="Ensembl"/>
</dbReference>
<dbReference type="GO" id="GO:0060076">
    <property type="term" value="C:excitatory synapse"/>
    <property type="evidence" value="ECO:0007669"/>
    <property type="project" value="Ensembl"/>
</dbReference>
<dbReference type="GO" id="GO:0098978">
    <property type="term" value="C:glutamatergic synapse"/>
    <property type="evidence" value="ECO:0000318"/>
    <property type="project" value="GO_Central"/>
</dbReference>
<dbReference type="GO" id="GO:0005886">
    <property type="term" value="C:plasma membrane"/>
    <property type="evidence" value="ECO:0000318"/>
    <property type="project" value="GO_Central"/>
</dbReference>
<dbReference type="GO" id="GO:0098839">
    <property type="term" value="C:postsynaptic density membrane"/>
    <property type="evidence" value="ECO:0000318"/>
    <property type="project" value="GO_Central"/>
</dbReference>
<dbReference type="GO" id="GO:0098685">
    <property type="term" value="C:Schaffer collateral - CA1 synapse"/>
    <property type="evidence" value="ECO:0007669"/>
    <property type="project" value="Ensembl"/>
</dbReference>
<dbReference type="GO" id="GO:1904861">
    <property type="term" value="P:excitatory synapse assembly"/>
    <property type="evidence" value="ECO:0000318"/>
    <property type="project" value="GO_Central"/>
</dbReference>
<dbReference type="GO" id="GO:0050804">
    <property type="term" value="P:modulation of chemical synaptic transmission"/>
    <property type="evidence" value="ECO:0000318"/>
    <property type="project" value="GO_Central"/>
</dbReference>
<dbReference type="GO" id="GO:0097119">
    <property type="term" value="P:postsynaptic density protein 95 clustering"/>
    <property type="evidence" value="ECO:0000318"/>
    <property type="project" value="GO_Central"/>
</dbReference>
<dbReference type="GO" id="GO:0099560">
    <property type="term" value="P:synaptic membrane adhesion"/>
    <property type="evidence" value="ECO:0000318"/>
    <property type="project" value="GO_Central"/>
</dbReference>
<dbReference type="FunFam" id="3.80.10.10:FF:000012">
    <property type="entry name" value="Leucine rich repeat containing 4"/>
    <property type="match status" value="1"/>
</dbReference>
<dbReference type="FunFam" id="2.60.40.10:FF:000076">
    <property type="entry name" value="Leucine-rich repeat and Ig domain-containing 4"/>
    <property type="match status" value="1"/>
</dbReference>
<dbReference type="Gene3D" id="2.60.40.10">
    <property type="entry name" value="Immunoglobulins"/>
    <property type="match status" value="1"/>
</dbReference>
<dbReference type="Gene3D" id="3.80.10.10">
    <property type="entry name" value="Ribonuclease Inhibitor"/>
    <property type="match status" value="1"/>
</dbReference>
<dbReference type="InterPro" id="IPR000483">
    <property type="entry name" value="Cys-rich_flank_reg_C"/>
</dbReference>
<dbReference type="InterPro" id="IPR007110">
    <property type="entry name" value="Ig-like_dom"/>
</dbReference>
<dbReference type="InterPro" id="IPR036179">
    <property type="entry name" value="Ig-like_dom_sf"/>
</dbReference>
<dbReference type="InterPro" id="IPR013783">
    <property type="entry name" value="Ig-like_fold"/>
</dbReference>
<dbReference type="InterPro" id="IPR013098">
    <property type="entry name" value="Ig_I-set"/>
</dbReference>
<dbReference type="InterPro" id="IPR003599">
    <property type="entry name" value="Ig_sub"/>
</dbReference>
<dbReference type="InterPro" id="IPR003598">
    <property type="entry name" value="Ig_sub2"/>
</dbReference>
<dbReference type="InterPro" id="IPR001611">
    <property type="entry name" value="Leu-rich_rpt"/>
</dbReference>
<dbReference type="InterPro" id="IPR003591">
    <property type="entry name" value="Leu-rich_rpt_typical-subtyp"/>
</dbReference>
<dbReference type="InterPro" id="IPR032675">
    <property type="entry name" value="LRR_dom_sf"/>
</dbReference>
<dbReference type="InterPro" id="IPR050541">
    <property type="entry name" value="LRR_TM_domain-containing"/>
</dbReference>
<dbReference type="InterPro" id="IPR000372">
    <property type="entry name" value="LRRNT"/>
</dbReference>
<dbReference type="PANTHER" id="PTHR24369">
    <property type="entry name" value="ANTIGEN BSP, PUTATIVE-RELATED"/>
    <property type="match status" value="1"/>
</dbReference>
<dbReference type="PANTHER" id="PTHR24369:SF9">
    <property type="entry name" value="LEUCINE-RICH REPEAT-CONTAINING PROTEIN 4"/>
    <property type="match status" value="1"/>
</dbReference>
<dbReference type="Pfam" id="PF07679">
    <property type="entry name" value="I-set"/>
    <property type="match status" value="1"/>
</dbReference>
<dbReference type="Pfam" id="PF13855">
    <property type="entry name" value="LRR_8"/>
    <property type="match status" value="3"/>
</dbReference>
<dbReference type="SMART" id="SM00409">
    <property type="entry name" value="IG"/>
    <property type="match status" value="1"/>
</dbReference>
<dbReference type="SMART" id="SM00408">
    <property type="entry name" value="IGc2"/>
    <property type="match status" value="1"/>
</dbReference>
<dbReference type="SMART" id="SM00369">
    <property type="entry name" value="LRR_TYP"/>
    <property type="match status" value="7"/>
</dbReference>
<dbReference type="SMART" id="SM00082">
    <property type="entry name" value="LRRCT"/>
    <property type="match status" value="1"/>
</dbReference>
<dbReference type="SMART" id="SM00013">
    <property type="entry name" value="LRRNT"/>
    <property type="match status" value="1"/>
</dbReference>
<dbReference type="SUPFAM" id="SSF48726">
    <property type="entry name" value="Immunoglobulin"/>
    <property type="match status" value="1"/>
</dbReference>
<dbReference type="SUPFAM" id="SSF52058">
    <property type="entry name" value="L domain-like"/>
    <property type="match status" value="1"/>
</dbReference>
<dbReference type="PROSITE" id="PS50835">
    <property type="entry name" value="IG_LIKE"/>
    <property type="match status" value="1"/>
</dbReference>
<dbReference type="PROSITE" id="PS51450">
    <property type="entry name" value="LRR"/>
    <property type="match status" value="7"/>
</dbReference>
<feature type="signal peptide" evidence="2">
    <location>
        <begin position="1"/>
        <end position="38"/>
    </location>
</feature>
<feature type="chain" id="PRO_0000014833" description="Leucine-rich repeat-containing protein 4">
    <location>
        <begin position="39"/>
        <end position="653"/>
    </location>
</feature>
<feature type="topological domain" description="Extracellular" evidence="2">
    <location>
        <begin position="39"/>
        <end position="527"/>
    </location>
</feature>
<feature type="transmembrane region" description="Helical" evidence="2">
    <location>
        <begin position="528"/>
        <end position="548"/>
    </location>
</feature>
<feature type="topological domain" description="Cytoplasmic" evidence="2">
    <location>
        <begin position="549"/>
        <end position="653"/>
    </location>
</feature>
<feature type="domain" description="LRRNT">
    <location>
        <begin position="39"/>
        <end position="75"/>
    </location>
</feature>
<feature type="repeat" description="LRR 1">
    <location>
        <begin position="76"/>
        <end position="97"/>
    </location>
</feature>
<feature type="repeat" description="LRR 2">
    <location>
        <begin position="100"/>
        <end position="121"/>
    </location>
</feature>
<feature type="repeat" description="LRR 3">
    <location>
        <begin position="124"/>
        <end position="145"/>
    </location>
</feature>
<feature type="repeat" description="LRR 4">
    <location>
        <begin position="148"/>
        <end position="169"/>
    </location>
</feature>
<feature type="repeat" description="LRR 5">
    <location>
        <begin position="172"/>
        <end position="194"/>
    </location>
</feature>
<feature type="repeat" description="LRR 6">
    <location>
        <begin position="197"/>
        <end position="218"/>
    </location>
</feature>
<feature type="repeat" description="LRR 7">
    <location>
        <begin position="219"/>
        <end position="240"/>
    </location>
</feature>
<feature type="repeat" description="LRR 8">
    <location>
        <begin position="243"/>
        <end position="264"/>
    </location>
</feature>
<feature type="repeat" description="LRR 9">
    <location>
        <begin position="267"/>
        <end position="288"/>
    </location>
</feature>
<feature type="domain" description="LRRCT">
    <location>
        <begin position="300"/>
        <end position="352"/>
    </location>
</feature>
<feature type="domain" description="Ig-like">
    <location>
        <begin position="353"/>
        <end position="442"/>
    </location>
</feature>
<feature type="glycosylation site" description="N-linked (GlcNAc...) asparagine" evidence="2">
    <location>
        <position position="277"/>
    </location>
</feature>
<feature type="glycosylation site" description="N-linked (GlcNAc...) asparagine" evidence="2">
    <location>
        <position position="322"/>
    </location>
</feature>
<feature type="glycosylation site" description="N-linked (GlcNAc...) asparagine" evidence="2">
    <location>
        <position position="363"/>
    </location>
</feature>
<feature type="glycosylation site" description="N-linked (GlcNAc...) asparagine" evidence="2">
    <location>
        <position position="388"/>
    </location>
</feature>
<feature type="glycosylation site" description="N-linked (GlcNAc...) asparagine" evidence="2">
    <location>
        <position position="410"/>
    </location>
</feature>
<feature type="glycosylation site" description="N-linked (GlcNAc...) asparagine" evidence="2">
    <location>
        <position position="434"/>
    </location>
</feature>
<feature type="glycosylation site" description="N-linked (GlcNAc...) asparagine" evidence="2">
    <location>
        <position position="440"/>
    </location>
</feature>
<feature type="glycosylation site" description="N-linked (GlcNAc...) asparagine" evidence="2">
    <location>
        <position position="447"/>
    </location>
</feature>
<feature type="glycosylation site" description="N-linked (GlcNAc...) asparagine" evidence="2">
    <location>
        <position position="450"/>
    </location>
</feature>
<feature type="disulfide bond" evidence="3 6">
    <location>
        <begin position="46"/>
        <end position="52"/>
    </location>
</feature>
<feature type="disulfide bond" evidence="3 6">
    <location>
        <begin position="50"/>
        <end position="61"/>
    </location>
</feature>
<feature type="disulfide bond" evidence="3 6">
    <location>
        <begin position="304"/>
        <end position="329"/>
    </location>
</feature>
<feature type="disulfide bond" evidence="3 6">
    <location>
        <begin position="306"/>
        <end position="350"/>
    </location>
</feature>
<feature type="disulfide bond" evidence="3 6">
    <location>
        <begin position="374"/>
        <end position="424"/>
    </location>
</feature>
<feature type="sequence variant" id="VAR_035519" description="In a colorectal cancer sample; somatic mutation." evidence="5">
    <original>T</original>
    <variation>A</variation>
    <location>
        <position position="579"/>
    </location>
</feature>
<feature type="sequence conflict" description="In Ref. 4; BAD18737." evidence="7" ref="4">
    <original>L</original>
    <variation>S</variation>
    <location>
        <position position="4"/>
    </location>
</feature>
<feature type="sequence conflict" description="In Ref. 2; CAC82651." evidence="7" ref="2">
    <original>QVSLI</original>
    <variation>H</variation>
    <location>
        <begin position="253"/>
        <end position="257"/>
    </location>
</feature>
<feature type="sequence conflict" description="In Ref. 4; BAD18737." evidence="7" ref="4">
    <original>N</original>
    <variation>D</variation>
    <location>
        <position position="300"/>
    </location>
</feature>
<feature type="sequence conflict" description="In Ref. 4; BAD18737." evidence="7" ref="4">
    <original>L</original>
    <variation>F</variation>
    <location>
        <position position="315"/>
    </location>
</feature>
<feature type="strand" evidence="9">
    <location>
        <begin position="50"/>
        <end position="52"/>
    </location>
</feature>
<feature type="strand" evidence="9">
    <location>
        <begin position="54"/>
        <end position="56"/>
    </location>
</feature>
<feature type="strand" evidence="9">
    <location>
        <begin position="58"/>
        <end position="60"/>
    </location>
</feature>
<feature type="strand" evidence="9">
    <location>
        <begin position="78"/>
        <end position="81"/>
    </location>
</feature>
<feature type="turn" evidence="9">
    <location>
        <begin position="92"/>
        <end position="97"/>
    </location>
</feature>
<feature type="strand" evidence="9">
    <location>
        <begin position="103"/>
        <end position="105"/>
    </location>
</feature>
<feature type="turn" evidence="9">
    <location>
        <begin position="116"/>
        <end position="121"/>
    </location>
</feature>
<feature type="strand" evidence="9">
    <location>
        <begin position="127"/>
        <end position="129"/>
    </location>
</feature>
<feature type="turn" evidence="9">
    <location>
        <begin position="140"/>
        <end position="142"/>
    </location>
</feature>
<feature type="strand" evidence="9">
    <location>
        <begin position="143"/>
        <end position="145"/>
    </location>
</feature>
<feature type="strand" evidence="9">
    <location>
        <begin position="151"/>
        <end position="153"/>
    </location>
</feature>
<feature type="turn" evidence="9">
    <location>
        <begin position="164"/>
        <end position="169"/>
    </location>
</feature>
<feature type="strand" evidence="9">
    <location>
        <begin position="175"/>
        <end position="177"/>
    </location>
</feature>
<feature type="turn" evidence="9">
    <location>
        <begin position="189"/>
        <end position="194"/>
    </location>
</feature>
<feature type="strand" evidence="9">
    <location>
        <begin position="200"/>
        <end position="202"/>
    </location>
</feature>
<feature type="strand" evidence="9">
    <location>
        <begin position="222"/>
        <end position="224"/>
    </location>
</feature>
<feature type="strand" evidence="9">
    <location>
        <begin position="231"/>
        <end position="233"/>
    </location>
</feature>
<feature type="helix" evidence="9">
    <location>
        <begin position="235"/>
        <end position="238"/>
    </location>
</feature>
<feature type="strand" evidence="9">
    <location>
        <begin position="246"/>
        <end position="248"/>
    </location>
</feature>
<feature type="turn" evidence="9">
    <location>
        <begin position="259"/>
        <end position="264"/>
    </location>
</feature>
<feature type="strand" evidence="9">
    <location>
        <begin position="270"/>
        <end position="272"/>
    </location>
</feature>
<feature type="strand" evidence="9">
    <location>
        <begin position="294"/>
        <end position="296"/>
    </location>
</feature>
<feature type="turn" evidence="9">
    <location>
        <begin position="306"/>
        <end position="308"/>
    </location>
</feature>
<feature type="helix" evidence="9">
    <location>
        <begin position="309"/>
        <end position="318"/>
    </location>
</feature>
<feature type="strand" evidence="9">
    <location>
        <begin position="328"/>
        <end position="332"/>
    </location>
</feature>
<feature type="turn" evidence="9">
    <location>
        <begin position="333"/>
        <end position="337"/>
    </location>
</feature>
<feature type="helix" evidence="9">
    <location>
        <begin position="345"/>
        <end position="347"/>
    </location>
</feature>
<feature type="strand" evidence="8">
    <location>
        <begin position="362"/>
        <end position="365"/>
    </location>
</feature>
<feature type="strand" evidence="8">
    <location>
        <begin position="370"/>
        <end position="372"/>
    </location>
</feature>
<feature type="strand" evidence="9">
    <location>
        <begin position="380"/>
        <end position="385"/>
    </location>
</feature>
<feature type="turn" evidence="8">
    <location>
        <begin position="387"/>
        <end position="389"/>
    </location>
</feature>
<feature type="strand" evidence="8">
    <location>
        <begin position="390"/>
        <end position="393"/>
    </location>
</feature>
<feature type="strand" evidence="8">
    <location>
        <begin position="399"/>
        <end position="403"/>
    </location>
</feature>
<feature type="strand" evidence="8">
    <location>
        <begin position="405"/>
        <end position="407"/>
    </location>
</feature>
<feature type="strand" evidence="8">
    <location>
        <begin position="409"/>
        <end position="413"/>
    </location>
</feature>
<feature type="turn" evidence="8">
    <location>
        <begin position="416"/>
        <end position="418"/>
    </location>
</feature>
<feature type="strand" evidence="9">
    <location>
        <begin position="420"/>
        <end position="427"/>
    </location>
</feature>
<feature type="strand" evidence="9">
    <location>
        <begin position="432"/>
        <end position="440"/>
    </location>
</feature>
<name>LRRC4_HUMAN</name>
<comment type="function">
    <text evidence="1">Synaptic adhesion protein. Regulates the formation of exitatory synapses through the recruitment of pre-and-postsynaptic proteins. Organize the lamina/pathway-specific differentiation of dendrites. Plays an important role for auditory synaptic responses. Involved in the suppression of glioma (By similarity).</text>
</comment>
<comment type="subunit">
    <text evidence="1 6">Interacts with DLG4 (By similarity). Interacts (via LRR repeats) with NTNG2. Forms a complex with DLG4 and with NMDA receptors.</text>
</comment>
<comment type="interaction">
    <interactant intactId="EBI-7444327">
        <id>Q9HBW1</id>
    </interactant>
    <interactant intactId="EBI-7444396">
        <id>Q9Y2I2</id>
        <label>NTNG1</label>
    </interactant>
    <organismsDiffer>false</organismsDiffer>
    <experiments>2</experiments>
</comment>
<comment type="interaction">
    <interactant intactId="EBI-7444327">
        <id>Q9HBW1</id>
    </interactant>
    <interactant intactId="EBI-750795">
        <id>Q96CW9</id>
        <label>NTNG2</label>
    </interactant>
    <organismsDiffer>false</organismsDiffer>
    <experiments>4</experiments>
</comment>
<comment type="subcellular location">
    <subcellularLocation>
        <location>Membrane</location>
        <topology>Single-pass type I membrane protein</topology>
    </subcellularLocation>
    <subcellularLocation>
        <location evidence="1">Postsynaptic cell membrane</location>
    </subcellularLocation>
    <text evidence="1">LRRC4 and DLG4 are interdependent for synaptic localization.</text>
</comment>
<comment type="tissue specificity">
    <text evidence="4">Specifically expressed in brain.</text>
</comment>
<comment type="domain">
    <text evidence="1">The last 4 C-terminal residues bind to the first 2 PDZ domains of DLG4.</text>
</comment>
<comment type="PTM">
    <text evidence="1">N-glycosylated.</text>
</comment>
<proteinExistence type="evidence at protein level"/>
<sequence length="653" mass="72717">MKLLWQVTVHHHTWNAILLPFVYLTAQVWILCAAIAAAASAGPQNCPSVCSCSNQFSKVVCTRRGLSEVPQGIPSNTRYLNLMENNIQMIQADTFRHLHHLEVLQLGRNSIRQIEVGAFNGLASLNTLELFDNWLTVIPSGAFEYLSKLRELWLRNNPIESIPSYAFNRVPSLMRLDLGELKKLEYISEGAFEGLFNLKYLNLGMCNIKDMPNLTPLVGLEELEMSGNHFPEIRPGSFHGLSSLKKLWVMNSQVSLIERNAFDGLASLVELNLAHNNLSSLPHDLFTPLRYLVELHLHHNPWNCDCDILWLAWWLREYIPTNSTCCGRCHAPMHMRGRYLVEVDQASFQCSAPFIMDAPRDLNISEGRMAELKCRTPPMSSVKWLLPNGTVLSHASRHPRISVLNDGTLNFSHVLLSDTGVYTCMVTNVAGNSNASAYLNVSTAELNTSNYSFFTTVTVETTEISPEDTTRKYKPVPTTSTGYQPAYTTSTTVLIQTTRVPKQVAVPATDTTDKMQTSLDEVMKTTKIIIGCFVAVTLLAAAMLIVFYKLRKRHQQRSTVTAARTVEIIQVDEDIPAATSAAATAAPSGVSGEGAVVLPTIHDHINYNTYKPAHGAHWTENSLGNSLHPTVTTISEPYIIQTHTKDKVQETQI</sequence>
<accession>Q9HBW1</accession>
<accession>A4D0Y9</accession>
<accession>Q14DU9</accession>
<accession>Q6ZMI8</accession>
<accession>Q96A85</accession>
<evidence type="ECO:0000250" key="1"/>
<evidence type="ECO:0000255" key="2"/>
<evidence type="ECO:0000255" key="3">
    <source>
        <dbReference type="PROSITE-ProRule" id="PRU00114"/>
    </source>
</evidence>
<evidence type="ECO:0000269" key="4">
    <source>
    </source>
</evidence>
<evidence type="ECO:0000269" key="5">
    <source>
    </source>
</evidence>
<evidence type="ECO:0000269" key="6">
    <source>
    </source>
</evidence>
<evidence type="ECO:0000305" key="7"/>
<evidence type="ECO:0007829" key="8">
    <source>
        <dbReference type="PDB" id="2DL9"/>
    </source>
</evidence>
<evidence type="ECO:0007829" key="9">
    <source>
        <dbReference type="PDB" id="3ZYI"/>
    </source>
</evidence>
<gene>
    <name type="primary">LRRC4</name>
    <name type="synonym">BAG</name>
    <name type="ORF">NAG14</name>
    <name type="ORF">UNQ554/PRO1111</name>
</gene>
<keyword id="KW-0002">3D-structure</keyword>
<keyword id="KW-1003">Cell membrane</keyword>
<keyword id="KW-1015">Disulfide bond</keyword>
<keyword id="KW-0325">Glycoprotein</keyword>
<keyword id="KW-0393">Immunoglobulin domain</keyword>
<keyword id="KW-0433">Leucine-rich repeat</keyword>
<keyword id="KW-0472">Membrane</keyword>
<keyword id="KW-0628">Postsynaptic cell membrane</keyword>
<keyword id="KW-1267">Proteomics identification</keyword>
<keyword id="KW-1185">Reference proteome</keyword>
<keyword id="KW-0677">Repeat</keyword>
<keyword id="KW-0732">Signal</keyword>
<keyword id="KW-0770">Synapse</keyword>
<keyword id="KW-0812">Transmembrane</keyword>
<keyword id="KW-1133">Transmembrane helix</keyword>
<protein>
    <recommendedName>
        <fullName>Leucine-rich repeat-containing protein 4</fullName>
    </recommendedName>
    <alternativeName>
        <fullName>Brain tumor-associated protein BAG</fullName>
    </alternativeName>
    <alternativeName>
        <fullName>Nasopharyngeal carcinoma-associated gene 14 protein</fullName>
    </alternativeName>
    <alternativeName>
        <fullName>Netrin-G2 ligand</fullName>
        <shortName>NGL-2</shortName>
    </alternativeName>
</protein>
<reference key="1">
    <citation type="journal article" date="2005" name="FEBS Lett.">
        <title>Expression and functional characterization of LRRC4, a novel brain-specific member of the LRR superfamily.</title>
        <authorList>
            <person name="Zhang Q."/>
            <person name="Wang J."/>
            <person name="Fan S."/>
            <person name="Wang L."/>
            <person name="Cao L."/>
            <person name="Tang K."/>
            <person name="Peng C."/>
            <person name="Li Z."/>
            <person name="Li W."/>
            <person name="Gan K."/>
            <person name="Liu Z."/>
            <person name="Li X."/>
            <person name="Shen S."/>
            <person name="Li G."/>
        </authorList>
    </citation>
    <scope>NUCLEOTIDE SEQUENCE [MRNA]</scope>
    <scope>TISSUE SPECIFICITY</scope>
</reference>
<reference key="2">
    <citation type="thesis" date="2000" institute="Zhongshan Medical University / Guangzhou" country="China">
        <authorList>
            <person name="Wang J."/>
        </authorList>
    </citation>
    <scope>NUCLEOTIDE SEQUENCE [MRNA]</scope>
</reference>
<reference key="3">
    <citation type="journal article" date="2003" name="Genome Res.">
        <title>The secreted protein discovery initiative (SPDI), a large-scale effort to identify novel human secreted and transmembrane proteins: a bioinformatics assessment.</title>
        <authorList>
            <person name="Clark H.F."/>
            <person name="Gurney A.L."/>
            <person name="Abaya E."/>
            <person name="Baker K."/>
            <person name="Baldwin D.T."/>
            <person name="Brush J."/>
            <person name="Chen J."/>
            <person name="Chow B."/>
            <person name="Chui C."/>
            <person name="Crowley C."/>
            <person name="Currell B."/>
            <person name="Deuel B."/>
            <person name="Dowd P."/>
            <person name="Eaton D."/>
            <person name="Foster J.S."/>
            <person name="Grimaldi C."/>
            <person name="Gu Q."/>
            <person name="Hass P.E."/>
            <person name="Heldens S."/>
            <person name="Huang A."/>
            <person name="Kim H.S."/>
            <person name="Klimowski L."/>
            <person name="Jin Y."/>
            <person name="Johnson S."/>
            <person name="Lee J."/>
            <person name="Lewis L."/>
            <person name="Liao D."/>
            <person name="Mark M.R."/>
            <person name="Robbie E."/>
            <person name="Sanchez C."/>
            <person name="Schoenfeld J."/>
            <person name="Seshagiri S."/>
            <person name="Simmons L."/>
            <person name="Singh J."/>
            <person name="Smith V."/>
            <person name="Stinson J."/>
            <person name="Vagts A."/>
            <person name="Vandlen R.L."/>
            <person name="Watanabe C."/>
            <person name="Wieand D."/>
            <person name="Woods K."/>
            <person name="Xie M.-H."/>
            <person name="Yansura D.G."/>
            <person name="Yi S."/>
            <person name="Yu G."/>
            <person name="Yuan J."/>
            <person name="Zhang M."/>
            <person name="Zhang Z."/>
            <person name="Goddard A.D."/>
            <person name="Wood W.I."/>
            <person name="Godowski P.J."/>
            <person name="Gray A.M."/>
        </authorList>
    </citation>
    <scope>NUCLEOTIDE SEQUENCE [LARGE SCALE MRNA]</scope>
</reference>
<reference key="4">
    <citation type="journal article" date="2004" name="Nat. Genet.">
        <title>Complete sequencing and characterization of 21,243 full-length human cDNAs.</title>
        <authorList>
            <person name="Ota T."/>
            <person name="Suzuki Y."/>
            <person name="Nishikawa T."/>
            <person name="Otsuki T."/>
            <person name="Sugiyama T."/>
            <person name="Irie R."/>
            <person name="Wakamatsu A."/>
            <person name="Hayashi K."/>
            <person name="Sato H."/>
            <person name="Nagai K."/>
            <person name="Kimura K."/>
            <person name="Makita H."/>
            <person name="Sekine M."/>
            <person name="Obayashi M."/>
            <person name="Nishi T."/>
            <person name="Shibahara T."/>
            <person name="Tanaka T."/>
            <person name="Ishii S."/>
            <person name="Yamamoto J."/>
            <person name="Saito K."/>
            <person name="Kawai Y."/>
            <person name="Isono Y."/>
            <person name="Nakamura Y."/>
            <person name="Nagahari K."/>
            <person name="Murakami K."/>
            <person name="Yasuda T."/>
            <person name="Iwayanagi T."/>
            <person name="Wagatsuma M."/>
            <person name="Shiratori A."/>
            <person name="Sudo H."/>
            <person name="Hosoiri T."/>
            <person name="Kaku Y."/>
            <person name="Kodaira H."/>
            <person name="Kondo H."/>
            <person name="Sugawara M."/>
            <person name="Takahashi M."/>
            <person name="Kanda K."/>
            <person name="Yokoi T."/>
            <person name="Furuya T."/>
            <person name="Kikkawa E."/>
            <person name="Omura Y."/>
            <person name="Abe K."/>
            <person name="Kamihara K."/>
            <person name="Katsuta N."/>
            <person name="Sato K."/>
            <person name="Tanikawa M."/>
            <person name="Yamazaki M."/>
            <person name="Ninomiya K."/>
            <person name="Ishibashi T."/>
            <person name="Yamashita H."/>
            <person name="Murakawa K."/>
            <person name="Fujimori K."/>
            <person name="Tanai H."/>
            <person name="Kimata M."/>
            <person name="Watanabe M."/>
            <person name="Hiraoka S."/>
            <person name="Chiba Y."/>
            <person name="Ishida S."/>
            <person name="Ono Y."/>
            <person name="Takiguchi S."/>
            <person name="Watanabe S."/>
            <person name="Yosida M."/>
            <person name="Hotuta T."/>
            <person name="Kusano J."/>
            <person name="Kanehori K."/>
            <person name="Takahashi-Fujii A."/>
            <person name="Hara H."/>
            <person name="Tanase T.-O."/>
            <person name="Nomura Y."/>
            <person name="Togiya S."/>
            <person name="Komai F."/>
            <person name="Hara R."/>
            <person name="Takeuchi K."/>
            <person name="Arita M."/>
            <person name="Imose N."/>
            <person name="Musashino K."/>
            <person name="Yuuki H."/>
            <person name="Oshima A."/>
            <person name="Sasaki N."/>
            <person name="Aotsuka S."/>
            <person name="Yoshikawa Y."/>
            <person name="Matsunawa H."/>
            <person name="Ichihara T."/>
            <person name="Shiohata N."/>
            <person name="Sano S."/>
            <person name="Moriya S."/>
            <person name="Momiyama H."/>
            <person name="Satoh N."/>
            <person name="Takami S."/>
            <person name="Terashima Y."/>
            <person name="Suzuki O."/>
            <person name="Nakagawa S."/>
            <person name="Senoh A."/>
            <person name="Mizoguchi H."/>
            <person name="Goto Y."/>
            <person name="Shimizu F."/>
            <person name="Wakebe H."/>
            <person name="Hishigaki H."/>
            <person name="Watanabe T."/>
            <person name="Sugiyama A."/>
            <person name="Takemoto M."/>
            <person name="Kawakami B."/>
            <person name="Yamazaki M."/>
            <person name="Watanabe K."/>
            <person name="Kumagai A."/>
            <person name="Itakura S."/>
            <person name="Fukuzumi Y."/>
            <person name="Fujimori Y."/>
            <person name="Komiyama M."/>
            <person name="Tashiro H."/>
            <person name="Tanigami A."/>
            <person name="Fujiwara T."/>
            <person name="Ono T."/>
            <person name="Yamada K."/>
            <person name="Fujii Y."/>
            <person name="Ozaki K."/>
            <person name="Hirao M."/>
            <person name="Ohmori Y."/>
            <person name="Kawabata A."/>
            <person name="Hikiji T."/>
            <person name="Kobatake N."/>
            <person name="Inagaki H."/>
            <person name="Ikema Y."/>
            <person name="Okamoto S."/>
            <person name="Okitani R."/>
            <person name="Kawakami T."/>
            <person name="Noguchi S."/>
            <person name="Itoh T."/>
            <person name="Shigeta K."/>
            <person name="Senba T."/>
            <person name="Matsumura K."/>
            <person name="Nakajima Y."/>
            <person name="Mizuno T."/>
            <person name="Morinaga M."/>
            <person name="Sasaki M."/>
            <person name="Togashi T."/>
            <person name="Oyama M."/>
            <person name="Hata H."/>
            <person name="Watanabe M."/>
            <person name="Komatsu T."/>
            <person name="Mizushima-Sugano J."/>
            <person name="Satoh T."/>
            <person name="Shirai Y."/>
            <person name="Takahashi Y."/>
            <person name="Nakagawa K."/>
            <person name="Okumura K."/>
            <person name="Nagase T."/>
            <person name="Nomura N."/>
            <person name="Kikuchi H."/>
            <person name="Masuho Y."/>
            <person name="Yamashita R."/>
            <person name="Nakai K."/>
            <person name="Yada T."/>
            <person name="Nakamura Y."/>
            <person name="Ohara O."/>
            <person name="Isogai T."/>
            <person name="Sugano S."/>
        </authorList>
    </citation>
    <scope>NUCLEOTIDE SEQUENCE [LARGE SCALE MRNA]</scope>
</reference>
<reference key="5">
    <citation type="journal article" date="2003" name="Science">
        <title>Human chromosome 7: DNA sequence and biology.</title>
        <authorList>
            <person name="Scherer S.W."/>
            <person name="Cheung J."/>
            <person name="MacDonald J.R."/>
            <person name="Osborne L.R."/>
            <person name="Nakabayashi K."/>
            <person name="Herbrick J.-A."/>
            <person name="Carson A.R."/>
            <person name="Parker-Katiraee L."/>
            <person name="Skaug J."/>
            <person name="Khaja R."/>
            <person name="Zhang J."/>
            <person name="Hudek A.K."/>
            <person name="Li M."/>
            <person name="Haddad M."/>
            <person name="Duggan G.E."/>
            <person name="Fernandez B.A."/>
            <person name="Kanematsu E."/>
            <person name="Gentles S."/>
            <person name="Christopoulos C.C."/>
            <person name="Choufani S."/>
            <person name="Kwasnicka D."/>
            <person name="Zheng X.H."/>
            <person name="Lai Z."/>
            <person name="Nusskern D.R."/>
            <person name="Zhang Q."/>
            <person name="Gu Z."/>
            <person name="Lu F."/>
            <person name="Zeesman S."/>
            <person name="Nowaczyk M.J."/>
            <person name="Teshima I."/>
            <person name="Chitayat D."/>
            <person name="Shuman C."/>
            <person name="Weksberg R."/>
            <person name="Zackai E.H."/>
            <person name="Grebe T.A."/>
            <person name="Cox S.R."/>
            <person name="Kirkpatrick S.J."/>
            <person name="Rahman N."/>
            <person name="Friedman J.M."/>
            <person name="Heng H.H.Q."/>
            <person name="Pelicci P.G."/>
            <person name="Lo-Coco F."/>
            <person name="Belloni E."/>
            <person name="Shaffer L.G."/>
            <person name="Pober B."/>
            <person name="Morton C.C."/>
            <person name="Gusella J.F."/>
            <person name="Bruns G.A.P."/>
            <person name="Korf B.R."/>
            <person name="Quade B.J."/>
            <person name="Ligon A.H."/>
            <person name="Ferguson H."/>
            <person name="Higgins A.W."/>
            <person name="Leach N.T."/>
            <person name="Herrick S.R."/>
            <person name="Lemyre E."/>
            <person name="Farra C.G."/>
            <person name="Kim H.-G."/>
            <person name="Summers A.M."/>
            <person name="Gripp K.W."/>
            <person name="Roberts W."/>
            <person name="Szatmari P."/>
            <person name="Winsor E.J.T."/>
            <person name="Grzeschik K.-H."/>
            <person name="Teebi A."/>
            <person name="Minassian B.A."/>
            <person name="Kere J."/>
            <person name="Armengol L."/>
            <person name="Pujana M.A."/>
            <person name="Estivill X."/>
            <person name="Wilson M.D."/>
            <person name="Koop B.F."/>
            <person name="Tosi S."/>
            <person name="Moore G.E."/>
            <person name="Boright A.P."/>
            <person name="Zlotorynski E."/>
            <person name="Kerem B."/>
            <person name="Kroisel P.M."/>
            <person name="Petek E."/>
            <person name="Oscier D.G."/>
            <person name="Mould S.J."/>
            <person name="Doehner H."/>
            <person name="Doehner K."/>
            <person name="Rommens J.M."/>
            <person name="Vincent J.B."/>
            <person name="Venter J.C."/>
            <person name="Li P.W."/>
            <person name="Mural R.J."/>
            <person name="Adams M.D."/>
            <person name="Tsui L.-C."/>
        </authorList>
    </citation>
    <scope>NUCLEOTIDE SEQUENCE [LARGE SCALE GENOMIC DNA]</scope>
</reference>
<reference key="6">
    <citation type="journal article" date="2004" name="Genome Res.">
        <title>The status, quality, and expansion of the NIH full-length cDNA project: the Mammalian Gene Collection (MGC).</title>
        <authorList>
            <consortium name="The MGC Project Team"/>
        </authorList>
    </citation>
    <scope>NUCLEOTIDE SEQUENCE [LARGE SCALE MRNA]</scope>
</reference>
<reference key="7">
    <citation type="submission" date="2006-10" db="PDB data bank">
        <title>Solution structure of the Ig-like domain of human leucine-rich repeat-containing protein 4.</title>
        <authorList>
            <consortium name="RIKEN structural genomics initiative (RSGI)"/>
        </authorList>
    </citation>
    <scope>STRUCTURE BY NMR OF 351-442</scope>
</reference>
<reference key="8">
    <citation type="journal article" date="2011" name="EMBO J.">
        <title>Structural basis for cell surface patterning through NetrinG-NGL interactions.</title>
        <authorList>
            <person name="Seiradake E."/>
            <person name="Coles C.H."/>
            <person name="Perestenko P.V."/>
            <person name="Harlos K."/>
            <person name="McIlhinney R.A."/>
            <person name="Aricescu A.R."/>
            <person name="Jones E.Y."/>
        </authorList>
    </citation>
    <scope>X-RAY CRYSTALLOGRAPHY (2.6 ANGSTROMS) OF 1-444 IN COMPLEX WITH NTNG2</scope>
    <scope>DISULFIDE BONDS</scope>
</reference>
<reference key="9">
    <citation type="journal article" date="2006" name="Science">
        <title>The consensus coding sequences of human breast and colorectal cancers.</title>
        <authorList>
            <person name="Sjoeblom T."/>
            <person name="Jones S."/>
            <person name="Wood L.D."/>
            <person name="Parsons D.W."/>
            <person name="Lin J."/>
            <person name="Barber T.D."/>
            <person name="Mandelker D."/>
            <person name="Leary R.J."/>
            <person name="Ptak J."/>
            <person name="Silliman N."/>
            <person name="Szabo S."/>
            <person name="Buckhaults P."/>
            <person name="Farrell C."/>
            <person name="Meeh P."/>
            <person name="Markowitz S.D."/>
            <person name="Willis J."/>
            <person name="Dawson D."/>
            <person name="Willson J.K.V."/>
            <person name="Gazdar A.F."/>
            <person name="Hartigan J."/>
            <person name="Wu L."/>
            <person name="Liu C."/>
            <person name="Parmigiani G."/>
            <person name="Park B.H."/>
            <person name="Bachman K.E."/>
            <person name="Papadopoulos N."/>
            <person name="Vogelstein B."/>
            <person name="Kinzler K.W."/>
            <person name="Velculescu V.E."/>
        </authorList>
    </citation>
    <scope>VARIANT [LARGE SCALE ANALYSIS] ALA-579</scope>
</reference>